<comment type="function">
    <text evidence="1">Cell wall formation. Catalyzes the transfer of a GlcNAc subunit on undecaprenyl-pyrophosphoryl-MurNAc-pentapeptide (lipid intermediate I) to form undecaprenyl-pyrophosphoryl-MurNAc-(pentapeptide)GlcNAc (lipid intermediate II).</text>
</comment>
<comment type="catalytic activity">
    <reaction evidence="1">
        <text>di-trans,octa-cis-undecaprenyl diphospho-N-acetyl-alpha-D-muramoyl-L-alanyl-D-glutamyl-meso-2,6-diaminopimeloyl-D-alanyl-D-alanine + UDP-N-acetyl-alpha-D-glucosamine = di-trans,octa-cis-undecaprenyl diphospho-[N-acetyl-alpha-D-glucosaminyl-(1-&gt;4)]-N-acetyl-alpha-D-muramoyl-L-alanyl-D-glutamyl-meso-2,6-diaminopimeloyl-D-alanyl-D-alanine + UDP + H(+)</text>
        <dbReference type="Rhea" id="RHEA:31227"/>
        <dbReference type="ChEBI" id="CHEBI:15378"/>
        <dbReference type="ChEBI" id="CHEBI:57705"/>
        <dbReference type="ChEBI" id="CHEBI:58223"/>
        <dbReference type="ChEBI" id="CHEBI:61387"/>
        <dbReference type="ChEBI" id="CHEBI:61388"/>
        <dbReference type="EC" id="2.4.1.227"/>
    </reaction>
</comment>
<comment type="pathway">
    <text evidence="1">Cell wall biogenesis; peptidoglycan biosynthesis.</text>
</comment>
<comment type="subcellular location">
    <subcellularLocation>
        <location evidence="1">Cell inner membrane</location>
        <topology evidence="1">Peripheral membrane protein</topology>
        <orientation evidence="1">Cytoplasmic side</orientation>
    </subcellularLocation>
</comment>
<comment type="similarity">
    <text evidence="1">Belongs to the glycosyltransferase 28 family. MurG subfamily.</text>
</comment>
<accession>A9BDG0</accession>
<protein>
    <recommendedName>
        <fullName evidence="1">UDP-N-acetylglucosamine--N-acetylmuramyl-(pentapeptide) pyrophosphoryl-undecaprenol N-acetylglucosamine transferase</fullName>
        <ecNumber evidence="1">2.4.1.227</ecNumber>
    </recommendedName>
    <alternativeName>
        <fullName evidence="1">Undecaprenyl-PP-MurNAc-pentapeptide-UDPGlcNAc GlcNAc transferase</fullName>
    </alternativeName>
</protein>
<dbReference type="EC" id="2.4.1.227" evidence="1"/>
<dbReference type="EMBL" id="CP000878">
    <property type="protein sequence ID" value="ABX08146.1"/>
    <property type="molecule type" value="Genomic_DNA"/>
</dbReference>
<dbReference type="RefSeq" id="WP_012194771.1">
    <property type="nucleotide sequence ID" value="NC_009976.1"/>
</dbReference>
<dbReference type="SMR" id="A9BDG0"/>
<dbReference type="STRING" id="93059.P9211_02151"/>
<dbReference type="CAZy" id="GT28">
    <property type="family name" value="Glycosyltransferase Family 28"/>
</dbReference>
<dbReference type="KEGG" id="pmj:P9211_02151"/>
<dbReference type="eggNOG" id="COG0707">
    <property type="taxonomic scope" value="Bacteria"/>
</dbReference>
<dbReference type="HOGENOM" id="CLU_037404_2_1_3"/>
<dbReference type="OrthoDB" id="9808936at2"/>
<dbReference type="UniPathway" id="UPA00219"/>
<dbReference type="Proteomes" id="UP000000788">
    <property type="component" value="Chromosome"/>
</dbReference>
<dbReference type="GO" id="GO:0005886">
    <property type="term" value="C:plasma membrane"/>
    <property type="evidence" value="ECO:0007669"/>
    <property type="project" value="UniProtKB-SubCell"/>
</dbReference>
<dbReference type="GO" id="GO:0051991">
    <property type="term" value="F:UDP-N-acetyl-D-glucosamine:N-acetylmuramoyl-L-alanyl-D-glutamyl-meso-2,6-diaminopimelyl-D-alanyl-D-alanine-diphosphoundecaprenol 4-beta-N-acetylglucosaminlytransferase activity"/>
    <property type="evidence" value="ECO:0007669"/>
    <property type="project" value="RHEA"/>
</dbReference>
<dbReference type="GO" id="GO:0050511">
    <property type="term" value="F:undecaprenyldiphospho-muramoylpentapeptide beta-N-acetylglucosaminyltransferase activity"/>
    <property type="evidence" value="ECO:0007669"/>
    <property type="project" value="UniProtKB-UniRule"/>
</dbReference>
<dbReference type="GO" id="GO:0005975">
    <property type="term" value="P:carbohydrate metabolic process"/>
    <property type="evidence" value="ECO:0007669"/>
    <property type="project" value="InterPro"/>
</dbReference>
<dbReference type="GO" id="GO:0051301">
    <property type="term" value="P:cell division"/>
    <property type="evidence" value="ECO:0007669"/>
    <property type="project" value="UniProtKB-KW"/>
</dbReference>
<dbReference type="GO" id="GO:0071555">
    <property type="term" value="P:cell wall organization"/>
    <property type="evidence" value="ECO:0007669"/>
    <property type="project" value="UniProtKB-KW"/>
</dbReference>
<dbReference type="GO" id="GO:0030259">
    <property type="term" value="P:lipid glycosylation"/>
    <property type="evidence" value="ECO:0007669"/>
    <property type="project" value="UniProtKB-UniRule"/>
</dbReference>
<dbReference type="GO" id="GO:0009252">
    <property type="term" value="P:peptidoglycan biosynthetic process"/>
    <property type="evidence" value="ECO:0007669"/>
    <property type="project" value="UniProtKB-UniRule"/>
</dbReference>
<dbReference type="GO" id="GO:0008360">
    <property type="term" value="P:regulation of cell shape"/>
    <property type="evidence" value="ECO:0007669"/>
    <property type="project" value="UniProtKB-KW"/>
</dbReference>
<dbReference type="CDD" id="cd03785">
    <property type="entry name" value="GT28_MurG"/>
    <property type="match status" value="1"/>
</dbReference>
<dbReference type="Gene3D" id="3.40.50.2000">
    <property type="entry name" value="Glycogen Phosphorylase B"/>
    <property type="match status" value="2"/>
</dbReference>
<dbReference type="HAMAP" id="MF_00033">
    <property type="entry name" value="MurG"/>
    <property type="match status" value="1"/>
</dbReference>
<dbReference type="InterPro" id="IPR006009">
    <property type="entry name" value="GlcNAc_MurG"/>
</dbReference>
<dbReference type="InterPro" id="IPR007235">
    <property type="entry name" value="Glyco_trans_28_C"/>
</dbReference>
<dbReference type="InterPro" id="IPR004276">
    <property type="entry name" value="GlycoTrans_28_N"/>
</dbReference>
<dbReference type="NCBIfam" id="TIGR01133">
    <property type="entry name" value="murG"/>
    <property type="match status" value="1"/>
</dbReference>
<dbReference type="PANTHER" id="PTHR21015:SF22">
    <property type="entry name" value="GLYCOSYLTRANSFERASE"/>
    <property type="match status" value="1"/>
</dbReference>
<dbReference type="PANTHER" id="PTHR21015">
    <property type="entry name" value="UDP-N-ACETYLGLUCOSAMINE--N-ACETYLMURAMYL-(PENTAPEPTIDE) PYROPHOSPHORYL-UNDECAPRENOL N-ACETYLGLUCOSAMINE TRANSFERASE 1"/>
    <property type="match status" value="1"/>
</dbReference>
<dbReference type="Pfam" id="PF04101">
    <property type="entry name" value="Glyco_tran_28_C"/>
    <property type="match status" value="1"/>
</dbReference>
<dbReference type="Pfam" id="PF03033">
    <property type="entry name" value="Glyco_transf_28"/>
    <property type="match status" value="1"/>
</dbReference>
<dbReference type="SUPFAM" id="SSF53756">
    <property type="entry name" value="UDP-Glycosyltransferase/glycogen phosphorylase"/>
    <property type="match status" value="1"/>
</dbReference>
<name>MURG_PROM4</name>
<evidence type="ECO:0000255" key="1">
    <source>
        <dbReference type="HAMAP-Rule" id="MF_00033"/>
    </source>
</evidence>
<keyword id="KW-0131">Cell cycle</keyword>
<keyword id="KW-0132">Cell division</keyword>
<keyword id="KW-0997">Cell inner membrane</keyword>
<keyword id="KW-1003">Cell membrane</keyword>
<keyword id="KW-0133">Cell shape</keyword>
<keyword id="KW-0961">Cell wall biogenesis/degradation</keyword>
<keyword id="KW-0328">Glycosyltransferase</keyword>
<keyword id="KW-0472">Membrane</keyword>
<keyword id="KW-0573">Peptidoglycan synthesis</keyword>
<keyword id="KW-1185">Reference proteome</keyword>
<keyword id="KW-0808">Transferase</keyword>
<gene>
    <name evidence="1" type="primary">murG</name>
    <name type="ordered locus">P9211_02151</name>
</gene>
<organism>
    <name type="scientific">Prochlorococcus marinus (strain MIT 9211)</name>
    <dbReference type="NCBI Taxonomy" id="93059"/>
    <lineage>
        <taxon>Bacteria</taxon>
        <taxon>Bacillati</taxon>
        <taxon>Cyanobacteriota</taxon>
        <taxon>Cyanophyceae</taxon>
        <taxon>Synechococcales</taxon>
        <taxon>Prochlorococcaceae</taxon>
        <taxon>Prochlorococcus</taxon>
    </lineage>
</organism>
<feature type="chain" id="PRO_1000090460" description="UDP-N-acetylglucosamine--N-acetylmuramyl-(pentapeptide) pyrophosphoryl-undecaprenol N-acetylglucosamine transferase">
    <location>
        <begin position="1"/>
        <end position="355"/>
    </location>
</feature>
<feature type="binding site" evidence="1">
    <location>
        <begin position="11"/>
        <end position="13"/>
    </location>
    <ligand>
        <name>UDP-N-acetyl-alpha-D-glucosamine</name>
        <dbReference type="ChEBI" id="CHEBI:57705"/>
    </ligand>
</feature>
<feature type="binding site" evidence="1">
    <location>
        <position position="120"/>
    </location>
    <ligand>
        <name>UDP-N-acetyl-alpha-D-glucosamine</name>
        <dbReference type="ChEBI" id="CHEBI:57705"/>
    </ligand>
</feature>
<feature type="binding site" evidence="1">
    <location>
        <position position="161"/>
    </location>
    <ligand>
        <name>UDP-N-acetyl-alpha-D-glucosamine</name>
        <dbReference type="ChEBI" id="CHEBI:57705"/>
    </ligand>
</feature>
<feature type="binding site" evidence="1">
    <location>
        <position position="188"/>
    </location>
    <ligand>
        <name>UDP-N-acetyl-alpha-D-glucosamine</name>
        <dbReference type="ChEBI" id="CHEBI:57705"/>
    </ligand>
</feature>
<feature type="binding site" evidence="1">
    <location>
        <position position="280"/>
    </location>
    <ligand>
        <name>UDP-N-acetyl-alpha-D-glucosamine</name>
        <dbReference type="ChEBI" id="CHEBI:57705"/>
    </ligand>
</feature>
<proteinExistence type="inferred from homology"/>
<reference key="1">
    <citation type="journal article" date="2007" name="PLoS Genet.">
        <title>Patterns and implications of gene gain and loss in the evolution of Prochlorococcus.</title>
        <authorList>
            <person name="Kettler G.C."/>
            <person name="Martiny A.C."/>
            <person name="Huang K."/>
            <person name="Zucker J."/>
            <person name="Coleman M.L."/>
            <person name="Rodrigue S."/>
            <person name="Chen F."/>
            <person name="Lapidus A."/>
            <person name="Ferriera S."/>
            <person name="Johnson J."/>
            <person name="Steglich C."/>
            <person name="Church G.M."/>
            <person name="Richardson P."/>
            <person name="Chisholm S.W."/>
        </authorList>
    </citation>
    <scope>NUCLEOTIDE SEQUENCE [LARGE SCALE GENOMIC DNA]</scope>
    <source>
        <strain>MIT 9211</strain>
    </source>
</reference>
<sequence length="355" mass="37963">MSCLLIAASGTGGHLFPALAVAEALPESWKVSWLGVSDRLESSLIPKKYQLSTIGVEGVQSRGIKRIVQIFKLLAATGSVICLIRRNRIQIVLTTGGYIAVPAVLAAKLTGKKVILHESNAIPGKATRLLGRLCDKVALGWPPAKKKLPGCKVTVTGTPVRKSFLMKNKLPSWAPSGPGPLIVVIGGSQGAVGLNDMVRAVLPFLLDQGCRIVHITGKNAQSKIIHTNLVEQPFSDDIPGLLQNADLVISRSGAGALSEFAVCEVPAILVPYPYAADNHQECNAIYASQFGAALIVHQHEPEGKALRNALERLLKKNLSQADTVENLLNLMRKGMAKMAVRDAHIHLMSLLKEAS</sequence>